<feature type="chain" id="PRO_0000350086" description="Dual-specificity RNA methyltransferase RlmN">
    <location>
        <begin position="1"/>
        <end position="378"/>
    </location>
</feature>
<feature type="domain" description="Radical SAM core" evidence="2">
    <location>
        <begin position="101"/>
        <end position="345"/>
    </location>
</feature>
<feature type="active site" description="Proton acceptor" evidence="1">
    <location>
        <position position="95"/>
    </location>
</feature>
<feature type="active site" description="S-methylcysteine intermediate" evidence="1">
    <location>
        <position position="350"/>
    </location>
</feature>
<feature type="binding site" evidence="1">
    <location>
        <position position="115"/>
    </location>
    <ligand>
        <name>[4Fe-4S] cluster</name>
        <dbReference type="ChEBI" id="CHEBI:49883"/>
        <note>4Fe-4S-S-AdoMet</note>
    </ligand>
</feature>
<feature type="binding site" evidence="1">
    <location>
        <position position="119"/>
    </location>
    <ligand>
        <name>[4Fe-4S] cluster</name>
        <dbReference type="ChEBI" id="CHEBI:49883"/>
        <note>4Fe-4S-S-AdoMet</note>
    </ligand>
</feature>
<feature type="binding site" evidence="1">
    <location>
        <position position="122"/>
    </location>
    <ligand>
        <name>[4Fe-4S] cluster</name>
        <dbReference type="ChEBI" id="CHEBI:49883"/>
        <note>4Fe-4S-S-AdoMet</note>
    </ligand>
</feature>
<feature type="binding site" evidence="1">
    <location>
        <begin position="176"/>
        <end position="177"/>
    </location>
    <ligand>
        <name>S-adenosyl-L-methionine</name>
        <dbReference type="ChEBI" id="CHEBI:59789"/>
    </ligand>
</feature>
<feature type="binding site" evidence="1">
    <location>
        <position position="208"/>
    </location>
    <ligand>
        <name>S-adenosyl-L-methionine</name>
        <dbReference type="ChEBI" id="CHEBI:59789"/>
    </ligand>
</feature>
<feature type="binding site" evidence="1">
    <location>
        <begin position="230"/>
        <end position="232"/>
    </location>
    <ligand>
        <name>S-adenosyl-L-methionine</name>
        <dbReference type="ChEBI" id="CHEBI:59789"/>
    </ligand>
</feature>
<feature type="binding site" evidence="1">
    <location>
        <position position="307"/>
    </location>
    <ligand>
        <name>S-adenosyl-L-methionine</name>
        <dbReference type="ChEBI" id="CHEBI:59789"/>
    </ligand>
</feature>
<feature type="disulfide bond" description="(transient)" evidence="1">
    <location>
        <begin position="108"/>
        <end position="350"/>
    </location>
</feature>
<accession>Q2SWE6</accession>
<gene>
    <name evidence="1" type="primary">rlmN</name>
    <name type="ordered locus">BTH_I2232</name>
</gene>
<sequence length="378" mass="41174">MASETIVNLLDLDAEGLVAYCGGLGEKAFRAKQLQRWIHQYNAADFDGMTDLAKSLREKLKGRAVIGTPDILSDHVSADGTRKWLINVGNGNAVETVFIPEETRGTLCVSSQAGCAVNCRFCSTGKQGFSRNLSTGEIVGQLRMAEFALRASLGRAPGPNGKAERVITNVVMMGMGEPLLNYSAVVPAMRLMLDDNAYGLSRRRVTLSTSGVVPMMDRLGAELPVALAVSLHAPNDALRDELVPLNKKHPLRELMAACQRYLKVAPRDFITFEYCMLDGVNDTEAHARELLALTRDVPCKFNLIPFNPFPESGLLRSKTEQIKRFAQVLIDAGVVTTIRKTRGDDIDAACGQLAGAVKDRTRLAERTGATKIIEVRAV</sequence>
<evidence type="ECO:0000255" key="1">
    <source>
        <dbReference type="HAMAP-Rule" id="MF_01849"/>
    </source>
</evidence>
<evidence type="ECO:0000255" key="2">
    <source>
        <dbReference type="PROSITE-ProRule" id="PRU01266"/>
    </source>
</evidence>
<comment type="function">
    <text evidence="1">Specifically methylates position 2 of adenine 2503 in 23S rRNA and position 2 of adenine 37 in tRNAs. m2A2503 modification seems to play a crucial role in the proofreading step occurring at the peptidyl transferase center and thus would serve to optimize ribosomal fidelity.</text>
</comment>
<comment type="catalytic activity">
    <reaction evidence="1">
        <text>adenosine(2503) in 23S rRNA + 2 reduced [2Fe-2S]-[ferredoxin] + 2 S-adenosyl-L-methionine = 2-methyladenosine(2503) in 23S rRNA + 5'-deoxyadenosine + L-methionine + 2 oxidized [2Fe-2S]-[ferredoxin] + S-adenosyl-L-homocysteine</text>
        <dbReference type="Rhea" id="RHEA:42916"/>
        <dbReference type="Rhea" id="RHEA-COMP:10000"/>
        <dbReference type="Rhea" id="RHEA-COMP:10001"/>
        <dbReference type="Rhea" id="RHEA-COMP:10152"/>
        <dbReference type="Rhea" id="RHEA-COMP:10282"/>
        <dbReference type="ChEBI" id="CHEBI:17319"/>
        <dbReference type="ChEBI" id="CHEBI:33737"/>
        <dbReference type="ChEBI" id="CHEBI:33738"/>
        <dbReference type="ChEBI" id="CHEBI:57844"/>
        <dbReference type="ChEBI" id="CHEBI:57856"/>
        <dbReference type="ChEBI" id="CHEBI:59789"/>
        <dbReference type="ChEBI" id="CHEBI:74411"/>
        <dbReference type="ChEBI" id="CHEBI:74497"/>
        <dbReference type="EC" id="2.1.1.192"/>
    </reaction>
</comment>
<comment type="catalytic activity">
    <reaction evidence="1">
        <text>adenosine(37) in tRNA + 2 reduced [2Fe-2S]-[ferredoxin] + 2 S-adenosyl-L-methionine = 2-methyladenosine(37) in tRNA + 5'-deoxyadenosine + L-methionine + 2 oxidized [2Fe-2S]-[ferredoxin] + S-adenosyl-L-homocysteine</text>
        <dbReference type="Rhea" id="RHEA:43332"/>
        <dbReference type="Rhea" id="RHEA-COMP:10000"/>
        <dbReference type="Rhea" id="RHEA-COMP:10001"/>
        <dbReference type="Rhea" id="RHEA-COMP:10162"/>
        <dbReference type="Rhea" id="RHEA-COMP:10485"/>
        <dbReference type="ChEBI" id="CHEBI:17319"/>
        <dbReference type="ChEBI" id="CHEBI:33737"/>
        <dbReference type="ChEBI" id="CHEBI:33738"/>
        <dbReference type="ChEBI" id="CHEBI:57844"/>
        <dbReference type="ChEBI" id="CHEBI:57856"/>
        <dbReference type="ChEBI" id="CHEBI:59789"/>
        <dbReference type="ChEBI" id="CHEBI:74411"/>
        <dbReference type="ChEBI" id="CHEBI:74497"/>
        <dbReference type="EC" id="2.1.1.192"/>
    </reaction>
</comment>
<comment type="cofactor">
    <cofactor evidence="1">
        <name>[4Fe-4S] cluster</name>
        <dbReference type="ChEBI" id="CHEBI:49883"/>
    </cofactor>
    <text evidence="1">Binds 1 [4Fe-4S] cluster. The cluster is coordinated with 3 cysteines and an exchangeable S-adenosyl-L-methionine.</text>
</comment>
<comment type="subcellular location">
    <subcellularLocation>
        <location evidence="1">Cytoplasm</location>
    </subcellularLocation>
</comment>
<comment type="miscellaneous">
    <text evidence="1">Reaction proceeds by a ping-pong mechanism involving intermediate methylation of a conserved cysteine residue.</text>
</comment>
<comment type="similarity">
    <text evidence="1">Belongs to the radical SAM superfamily. RlmN family.</text>
</comment>
<keyword id="KW-0004">4Fe-4S</keyword>
<keyword id="KW-0963">Cytoplasm</keyword>
<keyword id="KW-1015">Disulfide bond</keyword>
<keyword id="KW-0408">Iron</keyword>
<keyword id="KW-0411">Iron-sulfur</keyword>
<keyword id="KW-0479">Metal-binding</keyword>
<keyword id="KW-0489">Methyltransferase</keyword>
<keyword id="KW-0698">rRNA processing</keyword>
<keyword id="KW-0949">S-adenosyl-L-methionine</keyword>
<keyword id="KW-0808">Transferase</keyword>
<keyword id="KW-0819">tRNA processing</keyword>
<proteinExistence type="inferred from homology"/>
<protein>
    <recommendedName>
        <fullName evidence="1">Dual-specificity RNA methyltransferase RlmN</fullName>
        <ecNumber evidence="1">2.1.1.192</ecNumber>
    </recommendedName>
    <alternativeName>
        <fullName evidence="1">23S rRNA (adenine(2503)-C(2))-methyltransferase</fullName>
    </alternativeName>
    <alternativeName>
        <fullName evidence="1">23S rRNA m2A2503 methyltransferase</fullName>
    </alternativeName>
    <alternativeName>
        <fullName evidence="1">Ribosomal RNA large subunit methyltransferase N</fullName>
    </alternativeName>
    <alternativeName>
        <fullName evidence="1">tRNA (adenine(37)-C(2))-methyltransferase</fullName>
    </alternativeName>
    <alternativeName>
        <fullName evidence="1">tRNA m2A37 methyltransferase</fullName>
    </alternativeName>
</protein>
<dbReference type="EC" id="2.1.1.192" evidence="1"/>
<dbReference type="EMBL" id="CP000086">
    <property type="protein sequence ID" value="ABC38296.1"/>
    <property type="molecule type" value="Genomic_DNA"/>
</dbReference>
<dbReference type="RefSeq" id="WP_009909268.1">
    <property type="nucleotide sequence ID" value="NZ_CP008785.1"/>
</dbReference>
<dbReference type="SMR" id="Q2SWE6"/>
<dbReference type="GeneID" id="45121950"/>
<dbReference type="KEGG" id="bte:BTH_I2232"/>
<dbReference type="HOGENOM" id="CLU_029101_0_0_4"/>
<dbReference type="Proteomes" id="UP000001930">
    <property type="component" value="Chromosome I"/>
</dbReference>
<dbReference type="GO" id="GO:0005737">
    <property type="term" value="C:cytoplasm"/>
    <property type="evidence" value="ECO:0007669"/>
    <property type="project" value="UniProtKB-SubCell"/>
</dbReference>
<dbReference type="GO" id="GO:0051539">
    <property type="term" value="F:4 iron, 4 sulfur cluster binding"/>
    <property type="evidence" value="ECO:0007669"/>
    <property type="project" value="UniProtKB-UniRule"/>
</dbReference>
<dbReference type="GO" id="GO:0046872">
    <property type="term" value="F:metal ion binding"/>
    <property type="evidence" value="ECO:0007669"/>
    <property type="project" value="UniProtKB-KW"/>
</dbReference>
<dbReference type="GO" id="GO:0070040">
    <property type="term" value="F:rRNA (adenine(2503)-C2-)-methyltransferase activity"/>
    <property type="evidence" value="ECO:0007669"/>
    <property type="project" value="UniProtKB-UniRule"/>
</dbReference>
<dbReference type="GO" id="GO:0019843">
    <property type="term" value="F:rRNA binding"/>
    <property type="evidence" value="ECO:0007669"/>
    <property type="project" value="UniProtKB-UniRule"/>
</dbReference>
<dbReference type="GO" id="GO:0002935">
    <property type="term" value="F:tRNA (adenine(37)-C2)-methyltransferase activity"/>
    <property type="evidence" value="ECO:0007669"/>
    <property type="project" value="UniProtKB-UniRule"/>
</dbReference>
<dbReference type="GO" id="GO:0000049">
    <property type="term" value="F:tRNA binding"/>
    <property type="evidence" value="ECO:0007669"/>
    <property type="project" value="UniProtKB-UniRule"/>
</dbReference>
<dbReference type="GO" id="GO:0070475">
    <property type="term" value="P:rRNA base methylation"/>
    <property type="evidence" value="ECO:0007669"/>
    <property type="project" value="UniProtKB-UniRule"/>
</dbReference>
<dbReference type="GO" id="GO:0030488">
    <property type="term" value="P:tRNA methylation"/>
    <property type="evidence" value="ECO:0007669"/>
    <property type="project" value="UniProtKB-UniRule"/>
</dbReference>
<dbReference type="CDD" id="cd01335">
    <property type="entry name" value="Radical_SAM"/>
    <property type="match status" value="1"/>
</dbReference>
<dbReference type="FunFam" id="1.10.150.530:FF:000003">
    <property type="entry name" value="Dual-specificity RNA methyltransferase RlmN"/>
    <property type="match status" value="1"/>
</dbReference>
<dbReference type="FunFam" id="3.20.20.70:FF:000008">
    <property type="entry name" value="Dual-specificity RNA methyltransferase RlmN"/>
    <property type="match status" value="1"/>
</dbReference>
<dbReference type="Gene3D" id="1.10.150.530">
    <property type="match status" value="1"/>
</dbReference>
<dbReference type="Gene3D" id="3.20.20.70">
    <property type="entry name" value="Aldolase class I"/>
    <property type="match status" value="1"/>
</dbReference>
<dbReference type="HAMAP" id="MF_01849">
    <property type="entry name" value="RNA_methyltr_RlmN"/>
    <property type="match status" value="1"/>
</dbReference>
<dbReference type="InterPro" id="IPR013785">
    <property type="entry name" value="Aldolase_TIM"/>
</dbReference>
<dbReference type="InterPro" id="IPR040072">
    <property type="entry name" value="Methyltransferase_A"/>
</dbReference>
<dbReference type="InterPro" id="IPR048641">
    <property type="entry name" value="RlmN_N"/>
</dbReference>
<dbReference type="InterPro" id="IPR027492">
    <property type="entry name" value="RNA_MTrfase_RlmN"/>
</dbReference>
<dbReference type="InterPro" id="IPR004383">
    <property type="entry name" value="rRNA_lsu_MTrfase_RlmN/Cfr"/>
</dbReference>
<dbReference type="InterPro" id="IPR007197">
    <property type="entry name" value="rSAM"/>
</dbReference>
<dbReference type="NCBIfam" id="TIGR00048">
    <property type="entry name" value="rRNA_mod_RlmN"/>
    <property type="match status" value="1"/>
</dbReference>
<dbReference type="PANTHER" id="PTHR30544">
    <property type="entry name" value="23S RRNA METHYLTRANSFERASE"/>
    <property type="match status" value="1"/>
</dbReference>
<dbReference type="PANTHER" id="PTHR30544:SF5">
    <property type="entry name" value="RADICAL SAM CORE DOMAIN-CONTAINING PROTEIN"/>
    <property type="match status" value="1"/>
</dbReference>
<dbReference type="Pfam" id="PF04055">
    <property type="entry name" value="Radical_SAM"/>
    <property type="match status" value="1"/>
</dbReference>
<dbReference type="Pfam" id="PF21016">
    <property type="entry name" value="RlmN_N"/>
    <property type="match status" value="1"/>
</dbReference>
<dbReference type="PIRSF" id="PIRSF006004">
    <property type="entry name" value="CHP00048"/>
    <property type="match status" value="1"/>
</dbReference>
<dbReference type="SFLD" id="SFLDF00275">
    <property type="entry name" value="adenosine_C2_methyltransferase"/>
    <property type="match status" value="1"/>
</dbReference>
<dbReference type="SFLD" id="SFLDS00029">
    <property type="entry name" value="Radical_SAM"/>
    <property type="match status" value="1"/>
</dbReference>
<dbReference type="SUPFAM" id="SSF102114">
    <property type="entry name" value="Radical SAM enzymes"/>
    <property type="match status" value="1"/>
</dbReference>
<dbReference type="PROSITE" id="PS51918">
    <property type="entry name" value="RADICAL_SAM"/>
    <property type="match status" value="1"/>
</dbReference>
<reference key="1">
    <citation type="journal article" date="2005" name="BMC Genomics">
        <title>Bacterial genome adaptation to niches: divergence of the potential virulence genes in three Burkholderia species of different survival strategies.</title>
        <authorList>
            <person name="Kim H.S."/>
            <person name="Schell M.A."/>
            <person name="Yu Y."/>
            <person name="Ulrich R.L."/>
            <person name="Sarria S.H."/>
            <person name="Nierman W.C."/>
            <person name="DeShazer D."/>
        </authorList>
    </citation>
    <scope>NUCLEOTIDE SEQUENCE [LARGE SCALE GENOMIC DNA]</scope>
    <source>
        <strain>ATCC 700388 / DSM 13276 / CCUG 48851 / CIP 106301 / E264</strain>
    </source>
</reference>
<name>RLMN_BURTA</name>
<organism>
    <name type="scientific">Burkholderia thailandensis (strain ATCC 700388 / DSM 13276 / CCUG 48851 / CIP 106301 / E264)</name>
    <dbReference type="NCBI Taxonomy" id="271848"/>
    <lineage>
        <taxon>Bacteria</taxon>
        <taxon>Pseudomonadati</taxon>
        <taxon>Pseudomonadota</taxon>
        <taxon>Betaproteobacteria</taxon>
        <taxon>Burkholderiales</taxon>
        <taxon>Burkholderiaceae</taxon>
        <taxon>Burkholderia</taxon>
        <taxon>pseudomallei group</taxon>
    </lineage>
</organism>